<organism>
    <name type="scientific">Trichormus variabilis (strain ATCC 29413 / PCC 7937)</name>
    <name type="common">Anabaena variabilis</name>
    <dbReference type="NCBI Taxonomy" id="240292"/>
    <lineage>
        <taxon>Bacteria</taxon>
        <taxon>Bacillati</taxon>
        <taxon>Cyanobacteriota</taxon>
        <taxon>Cyanophyceae</taxon>
        <taxon>Nostocales</taxon>
        <taxon>Nostocaceae</taxon>
        <taxon>Trichormus</taxon>
    </lineage>
</organism>
<accession>Q3MAN8</accession>
<proteinExistence type="inferred from homology"/>
<sequence length="467" mass="52535">MTIAQEPTALNFECETGNYHTFCPISCVAWLYQKIEDSFFLVIGTKTCGYFLQNAMGVMIFAEPRYAMAELEEGDISAQLNDYAELKRLCEQIKRDRNPSVIVWIGTCTTEIIKMDLEGLAPKLEGELGIPIVVARANGLDYAFTQGEDTVLAAMAHRCPDKAPVAEAEKNERNAVQKLLNFGKKKELVAQEESEYVDHPPLVLFGSLPDPVVTQLTLELKKQGIKVSGWLPAKRFTELPVLEEGYYVAGVNPFLSRTATTLMRRRKCKLIGAPFPIGPDGTRAWIEKICSVFGITPQGLDEREAQIWAGLEDYVKLIRGKSVFFMGDNLLEVSLARFLVRCGMTVQEVGIPYMDKRYQAAELAMLEKACQEMGVPSPKMVEKPDNYNQVQRIYDLKPDLVITGMAHANPLEARGINTKWSVEFTFAQIHGFTNARDILELVTRPLRRNNNLKDLGWDKLVREEAKI</sequence>
<feature type="chain" id="PRO_1000048394" description="Light-independent protochlorophyllide reductase subunit N">
    <location>
        <begin position="1"/>
        <end position="467"/>
    </location>
</feature>
<feature type="binding site" evidence="1">
    <location>
        <position position="23"/>
    </location>
    <ligand>
        <name>[4Fe-4S] cluster</name>
        <dbReference type="ChEBI" id="CHEBI:49883"/>
        <note>ligand shared with heterodimeric partner</note>
    </ligand>
</feature>
<feature type="binding site" evidence="1">
    <location>
        <position position="48"/>
    </location>
    <ligand>
        <name>[4Fe-4S] cluster</name>
        <dbReference type="ChEBI" id="CHEBI:49883"/>
        <note>ligand shared with heterodimeric partner</note>
    </ligand>
</feature>
<feature type="binding site" evidence="1">
    <location>
        <position position="108"/>
    </location>
    <ligand>
        <name>[4Fe-4S] cluster</name>
        <dbReference type="ChEBI" id="CHEBI:49883"/>
        <note>ligand shared with heterodimeric partner</note>
    </ligand>
</feature>
<gene>
    <name evidence="1" type="primary">chlN</name>
    <name type="ordered locus">Ava_2330</name>
</gene>
<keyword id="KW-0004">4Fe-4S</keyword>
<keyword id="KW-0067">ATP-binding</keyword>
<keyword id="KW-0149">Chlorophyll biosynthesis</keyword>
<keyword id="KW-0408">Iron</keyword>
<keyword id="KW-0411">Iron-sulfur</keyword>
<keyword id="KW-0479">Metal-binding</keyword>
<keyword id="KW-0547">Nucleotide-binding</keyword>
<keyword id="KW-0560">Oxidoreductase</keyword>
<keyword id="KW-0602">Photosynthesis</keyword>
<name>CHLN_TRIV2</name>
<protein>
    <recommendedName>
        <fullName evidence="1">Light-independent protochlorophyllide reductase subunit N</fullName>
        <shortName evidence="1">DPOR subunit N</shortName>
        <shortName evidence="1">LI-POR subunit N</shortName>
        <ecNumber evidence="1">1.3.7.7</ecNumber>
    </recommendedName>
</protein>
<dbReference type="EC" id="1.3.7.7" evidence="1"/>
<dbReference type="EMBL" id="CP000117">
    <property type="protein sequence ID" value="ABA21948.1"/>
    <property type="molecule type" value="Genomic_DNA"/>
</dbReference>
<dbReference type="SMR" id="Q3MAN8"/>
<dbReference type="STRING" id="240292.Ava_2330"/>
<dbReference type="KEGG" id="ava:Ava_2330"/>
<dbReference type="eggNOG" id="COG2710">
    <property type="taxonomic scope" value="Bacteria"/>
</dbReference>
<dbReference type="HOGENOM" id="CLU_037170_0_0_3"/>
<dbReference type="UniPathway" id="UPA00670"/>
<dbReference type="Proteomes" id="UP000002533">
    <property type="component" value="Chromosome"/>
</dbReference>
<dbReference type="GO" id="GO:0051539">
    <property type="term" value="F:4 iron, 4 sulfur cluster binding"/>
    <property type="evidence" value="ECO:0007669"/>
    <property type="project" value="UniProtKB-UniRule"/>
</dbReference>
<dbReference type="GO" id="GO:0005524">
    <property type="term" value="F:ATP binding"/>
    <property type="evidence" value="ECO:0007669"/>
    <property type="project" value="UniProtKB-UniRule"/>
</dbReference>
<dbReference type="GO" id="GO:0046872">
    <property type="term" value="F:metal ion binding"/>
    <property type="evidence" value="ECO:0007669"/>
    <property type="project" value="UniProtKB-KW"/>
</dbReference>
<dbReference type="GO" id="GO:0016730">
    <property type="term" value="F:oxidoreductase activity, acting on iron-sulfur proteins as donors"/>
    <property type="evidence" value="ECO:0007669"/>
    <property type="project" value="InterPro"/>
</dbReference>
<dbReference type="GO" id="GO:0016636">
    <property type="term" value="F:oxidoreductase activity, acting on the CH-CH group of donors, iron-sulfur protein as acceptor"/>
    <property type="evidence" value="ECO:0007669"/>
    <property type="project" value="UniProtKB-UniRule"/>
</dbReference>
<dbReference type="GO" id="GO:0036068">
    <property type="term" value="P:light-independent chlorophyll biosynthetic process"/>
    <property type="evidence" value="ECO:0007669"/>
    <property type="project" value="UniProtKB-UniRule"/>
</dbReference>
<dbReference type="GO" id="GO:0019685">
    <property type="term" value="P:photosynthesis, dark reaction"/>
    <property type="evidence" value="ECO:0007669"/>
    <property type="project" value="InterPro"/>
</dbReference>
<dbReference type="CDD" id="cd01979">
    <property type="entry name" value="Pchlide_reductase_N"/>
    <property type="match status" value="1"/>
</dbReference>
<dbReference type="Gene3D" id="3.40.50.1980">
    <property type="entry name" value="Nitrogenase molybdenum iron protein domain"/>
    <property type="match status" value="3"/>
</dbReference>
<dbReference type="HAMAP" id="MF_00352">
    <property type="entry name" value="ChlN_BchN"/>
    <property type="match status" value="1"/>
</dbReference>
<dbReference type="InterPro" id="IPR050293">
    <property type="entry name" value="LIPOR_BchN/ChlN"/>
</dbReference>
<dbReference type="InterPro" id="IPR000510">
    <property type="entry name" value="Nase/OxRdtase_comp1"/>
</dbReference>
<dbReference type="InterPro" id="IPR005970">
    <property type="entry name" value="Protochl_reductN"/>
</dbReference>
<dbReference type="NCBIfam" id="TIGR01279">
    <property type="entry name" value="DPOR_bchN"/>
    <property type="match status" value="1"/>
</dbReference>
<dbReference type="NCBIfam" id="NF002768">
    <property type="entry name" value="PRK02842.1"/>
    <property type="match status" value="1"/>
</dbReference>
<dbReference type="PANTHER" id="PTHR39429">
    <property type="entry name" value="LIGHT-INDEPENDENT PROTOCHLOROPHYLLIDE REDUCTASE SUBUNIT N"/>
    <property type="match status" value="1"/>
</dbReference>
<dbReference type="PANTHER" id="PTHR39429:SF3">
    <property type="entry name" value="LIGHT-INDEPENDENT PROTOCHLOROPHYLLIDE REDUCTASE SUBUNIT N"/>
    <property type="match status" value="1"/>
</dbReference>
<dbReference type="Pfam" id="PF00148">
    <property type="entry name" value="Oxidored_nitro"/>
    <property type="match status" value="1"/>
</dbReference>
<dbReference type="PIRSF" id="PIRSF000162">
    <property type="entry name" value="P_chlorophyll_rd"/>
    <property type="match status" value="1"/>
</dbReference>
<dbReference type="SUPFAM" id="SSF53807">
    <property type="entry name" value="Helical backbone' metal receptor"/>
    <property type="match status" value="1"/>
</dbReference>
<comment type="function">
    <text evidence="1">Component of the dark-operative protochlorophyllide reductase (DPOR) that uses Mg-ATP and reduced ferredoxin to reduce ring D of protochlorophyllide (Pchlide) to form chlorophyllide a (Chlide). This reaction is light-independent. The NB-protein (ChlN-ChlB) is the catalytic component of the complex.</text>
</comment>
<comment type="catalytic activity">
    <reaction evidence="1">
        <text>chlorophyllide a + oxidized 2[4Fe-4S]-[ferredoxin] + 2 ADP + 2 phosphate = protochlorophyllide a + reduced 2[4Fe-4S]-[ferredoxin] + 2 ATP + 2 H2O</text>
        <dbReference type="Rhea" id="RHEA:28202"/>
        <dbReference type="Rhea" id="RHEA-COMP:10002"/>
        <dbReference type="Rhea" id="RHEA-COMP:10004"/>
        <dbReference type="ChEBI" id="CHEBI:15377"/>
        <dbReference type="ChEBI" id="CHEBI:30616"/>
        <dbReference type="ChEBI" id="CHEBI:33722"/>
        <dbReference type="ChEBI" id="CHEBI:33723"/>
        <dbReference type="ChEBI" id="CHEBI:43474"/>
        <dbReference type="ChEBI" id="CHEBI:83348"/>
        <dbReference type="ChEBI" id="CHEBI:83350"/>
        <dbReference type="ChEBI" id="CHEBI:456216"/>
        <dbReference type="EC" id="1.3.7.7"/>
    </reaction>
</comment>
<comment type="cofactor">
    <cofactor evidence="1">
        <name>[4Fe-4S] cluster</name>
        <dbReference type="ChEBI" id="CHEBI:49883"/>
    </cofactor>
    <text evidence="1">Binds 1 [4Fe-4S] cluster per heterodimer. The cluster is bound at the heterodimer interface by residues from both subunits.</text>
</comment>
<comment type="pathway">
    <text evidence="1">Porphyrin-containing compound metabolism; chlorophyll biosynthesis (light-independent).</text>
</comment>
<comment type="subunit">
    <text evidence="1">Protochlorophyllide reductase is composed of three subunits; ChlL, ChlN and ChlB. Forms a heterotetramer of two ChlB and two ChlN subunits.</text>
</comment>
<comment type="similarity">
    <text evidence="1">Belongs to the BchN/ChlN family.</text>
</comment>
<evidence type="ECO:0000255" key="1">
    <source>
        <dbReference type="HAMAP-Rule" id="MF_00352"/>
    </source>
</evidence>
<reference key="1">
    <citation type="journal article" date="2014" name="Stand. Genomic Sci.">
        <title>Complete genome sequence of Anabaena variabilis ATCC 29413.</title>
        <authorList>
            <person name="Thiel T."/>
            <person name="Pratte B.S."/>
            <person name="Zhong J."/>
            <person name="Goodwin L."/>
            <person name="Copeland A."/>
            <person name="Lucas S."/>
            <person name="Han C."/>
            <person name="Pitluck S."/>
            <person name="Land M.L."/>
            <person name="Kyrpides N.C."/>
            <person name="Woyke T."/>
        </authorList>
    </citation>
    <scope>NUCLEOTIDE SEQUENCE [LARGE SCALE GENOMIC DNA]</scope>
    <source>
        <strain>ATCC 29413 / PCC 7937</strain>
    </source>
</reference>